<dbReference type="EC" id="2.8.1.13" evidence="1"/>
<dbReference type="EMBL" id="CP000802">
    <property type="protein sequence ID" value="ABV05592.1"/>
    <property type="molecule type" value="Genomic_DNA"/>
</dbReference>
<dbReference type="RefSeq" id="WP_001297484.1">
    <property type="nucleotide sequence ID" value="NC_009800.1"/>
</dbReference>
<dbReference type="SMR" id="A7ZZ88"/>
<dbReference type="GeneID" id="75203719"/>
<dbReference type="KEGG" id="ecx:EcHS_A1253"/>
<dbReference type="HOGENOM" id="CLU_035188_1_0_6"/>
<dbReference type="GO" id="GO:0005737">
    <property type="term" value="C:cytoplasm"/>
    <property type="evidence" value="ECO:0007669"/>
    <property type="project" value="UniProtKB-SubCell"/>
</dbReference>
<dbReference type="GO" id="GO:0005524">
    <property type="term" value="F:ATP binding"/>
    <property type="evidence" value="ECO:0007669"/>
    <property type="project" value="UniProtKB-KW"/>
</dbReference>
<dbReference type="GO" id="GO:0000049">
    <property type="term" value="F:tRNA binding"/>
    <property type="evidence" value="ECO:0007669"/>
    <property type="project" value="UniProtKB-KW"/>
</dbReference>
<dbReference type="GO" id="GO:0103016">
    <property type="term" value="F:tRNA-uridine 2-sulfurtransferase activity"/>
    <property type="evidence" value="ECO:0007669"/>
    <property type="project" value="UniProtKB-EC"/>
</dbReference>
<dbReference type="GO" id="GO:0002143">
    <property type="term" value="P:tRNA wobble position uridine thiolation"/>
    <property type="evidence" value="ECO:0007669"/>
    <property type="project" value="TreeGrafter"/>
</dbReference>
<dbReference type="CDD" id="cd01998">
    <property type="entry name" value="MnmA_TRMU-like"/>
    <property type="match status" value="1"/>
</dbReference>
<dbReference type="FunFam" id="2.30.30.280:FF:000001">
    <property type="entry name" value="tRNA-specific 2-thiouridylase MnmA"/>
    <property type="match status" value="1"/>
</dbReference>
<dbReference type="FunFam" id="2.40.30.10:FF:000023">
    <property type="entry name" value="tRNA-specific 2-thiouridylase MnmA"/>
    <property type="match status" value="1"/>
</dbReference>
<dbReference type="FunFam" id="3.40.50.620:FF:000004">
    <property type="entry name" value="tRNA-specific 2-thiouridylase MnmA"/>
    <property type="match status" value="1"/>
</dbReference>
<dbReference type="Gene3D" id="2.30.30.280">
    <property type="entry name" value="Adenine nucleotide alpha hydrolases-like domains"/>
    <property type="match status" value="1"/>
</dbReference>
<dbReference type="Gene3D" id="3.40.50.620">
    <property type="entry name" value="HUPs"/>
    <property type="match status" value="1"/>
</dbReference>
<dbReference type="Gene3D" id="2.40.30.10">
    <property type="entry name" value="Translation factors"/>
    <property type="match status" value="1"/>
</dbReference>
<dbReference type="HAMAP" id="MF_00144">
    <property type="entry name" value="tRNA_thiouridyl_MnmA"/>
    <property type="match status" value="1"/>
</dbReference>
<dbReference type="InterPro" id="IPR004506">
    <property type="entry name" value="MnmA-like"/>
</dbReference>
<dbReference type="InterPro" id="IPR046885">
    <property type="entry name" value="MnmA-like_C"/>
</dbReference>
<dbReference type="InterPro" id="IPR046884">
    <property type="entry name" value="MnmA-like_central"/>
</dbReference>
<dbReference type="InterPro" id="IPR023382">
    <property type="entry name" value="MnmA-like_central_sf"/>
</dbReference>
<dbReference type="InterPro" id="IPR014729">
    <property type="entry name" value="Rossmann-like_a/b/a_fold"/>
</dbReference>
<dbReference type="NCBIfam" id="NF001138">
    <property type="entry name" value="PRK00143.1"/>
    <property type="match status" value="1"/>
</dbReference>
<dbReference type="NCBIfam" id="TIGR00420">
    <property type="entry name" value="trmU"/>
    <property type="match status" value="1"/>
</dbReference>
<dbReference type="PANTHER" id="PTHR11933:SF5">
    <property type="entry name" value="MITOCHONDRIAL TRNA-SPECIFIC 2-THIOURIDYLASE 1"/>
    <property type="match status" value="1"/>
</dbReference>
<dbReference type="PANTHER" id="PTHR11933">
    <property type="entry name" value="TRNA 5-METHYLAMINOMETHYL-2-THIOURIDYLATE -METHYLTRANSFERASE"/>
    <property type="match status" value="1"/>
</dbReference>
<dbReference type="Pfam" id="PF03054">
    <property type="entry name" value="tRNA_Me_trans"/>
    <property type="match status" value="1"/>
</dbReference>
<dbReference type="Pfam" id="PF20258">
    <property type="entry name" value="tRNA_Me_trans_C"/>
    <property type="match status" value="1"/>
</dbReference>
<dbReference type="Pfam" id="PF20259">
    <property type="entry name" value="tRNA_Me_trans_M"/>
    <property type="match status" value="1"/>
</dbReference>
<dbReference type="SUPFAM" id="SSF52402">
    <property type="entry name" value="Adenine nucleotide alpha hydrolases-like"/>
    <property type="match status" value="1"/>
</dbReference>
<proteinExistence type="inferred from homology"/>
<gene>
    <name evidence="1" type="primary">mnmA</name>
    <name type="ordered locus">EcHS_A1253</name>
</gene>
<sequence>MSETAKKVIVGMSGGVDSSVSAWLLQQQGYQVEGLFMKNWEEDDGEEYCTAAADLADAQAVCDKLGIELHTVNFAAEYWDNVFELFLAEYKAGRTPNPDILCNKEIKFKAFLEFAAEDLGADYIATGHYVRRADVDGKSRLLRGLDSNKDQSYFLYTLSHEQIAQSLFPVGELEKPQVRKIAEDLGLVTAKKKDSTGICFIGERKFREFLGRYLPAQPGKIITVDGDEIGEHQGLMYHTLGQRKGLGIGGTKEGTEEPWYVVDKDVENNILVVAQGHEHPRLMSVGLIAQQLHWVDREPFTGTMRCTVKTRYRQTDIPCTVKALDDDRIEVIFDEPVAAVTPGQSAVFYNGEVCLGGGIIEQRLPLPV</sequence>
<reference key="1">
    <citation type="journal article" date="2008" name="J. Bacteriol.">
        <title>The pangenome structure of Escherichia coli: comparative genomic analysis of E. coli commensal and pathogenic isolates.</title>
        <authorList>
            <person name="Rasko D.A."/>
            <person name="Rosovitz M.J."/>
            <person name="Myers G.S.A."/>
            <person name="Mongodin E.F."/>
            <person name="Fricke W.F."/>
            <person name="Gajer P."/>
            <person name="Crabtree J."/>
            <person name="Sebaihia M."/>
            <person name="Thomson N.R."/>
            <person name="Chaudhuri R."/>
            <person name="Henderson I.R."/>
            <person name="Sperandio V."/>
            <person name="Ravel J."/>
        </authorList>
    </citation>
    <scope>NUCLEOTIDE SEQUENCE [LARGE SCALE GENOMIC DNA]</scope>
    <source>
        <strain>HS</strain>
    </source>
</reference>
<name>MNMA_ECOHS</name>
<feature type="chain" id="PRO_0000349633" description="tRNA-specific 2-thiouridylase MnmA">
    <location>
        <begin position="1"/>
        <end position="368"/>
    </location>
</feature>
<feature type="region of interest" description="Interaction with target base in tRNA" evidence="1">
    <location>
        <begin position="97"/>
        <end position="99"/>
    </location>
</feature>
<feature type="region of interest" description="Interaction with tRNA" evidence="1">
    <location>
        <begin position="149"/>
        <end position="151"/>
    </location>
</feature>
<feature type="region of interest" description="Interaction with tRNA" evidence="1">
    <location>
        <begin position="311"/>
        <end position="312"/>
    </location>
</feature>
<feature type="active site" description="Nucleophile" evidence="1">
    <location>
        <position position="102"/>
    </location>
</feature>
<feature type="active site" description="Cysteine persulfide intermediate" evidence="1">
    <location>
        <position position="199"/>
    </location>
</feature>
<feature type="binding site" evidence="1">
    <location>
        <begin position="11"/>
        <end position="18"/>
    </location>
    <ligand>
        <name>ATP</name>
        <dbReference type="ChEBI" id="CHEBI:30616"/>
    </ligand>
</feature>
<feature type="binding site" evidence="1">
    <location>
        <position position="37"/>
    </location>
    <ligand>
        <name>ATP</name>
        <dbReference type="ChEBI" id="CHEBI:30616"/>
    </ligand>
</feature>
<feature type="binding site" evidence="1">
    <location>
        <position position="127"/>
    </location>
    <ligand>
        <name>ATP</name>
        <dbReference type="ChEBI" id="CHEBI:30616"/>
    </ligand>
</feature>
<feature type="site" description="Interaction with tRNA" evidence="1">
    <location>
        <position position="128"/>
    </location>
</feature>
<feature type="site" description="Interaction with tRNA" evidence="1">
    <location>
        <position position="344"/>
    </location>
</feature>
<feature type="disulfide bond" description="Alternate" evidence="1">
    <location>
        <begin position="102"/>
        <end position="199"/>
    </location>
</feature>
<keyword id="KW-0067">ATP-binding</keyword>
<keyword id="KW-0963">Cytoplasm</keyword>
<keyword id="KW-1015">Disulfide bond</keyword>
<keyword id="KW-0547">Nucleotide-binding</keyword>
<keyword id="KW-0694">RNA-binding</keyword>
<keyword id="KW-0808">Transferase</keyword>
<keyword id="KW-0819">tRNA processing</keyword>
<keyword id="KW-0820">tRNA-binding</keyword>
<protein>
    <recommendedName>
        <fullName evidence="1">tRNA-specific 2-thiouridylase MnmA</fullName>
        <ecNumber evidence="1">2.8.1.13</ecNumber>
    </recommendedName>
</protein>
<organism>
    <name type="scientific">Escherichia coli O9:H4 (strain HS)</name>
    <dbReference type="NCBI Taxonomy" id="331112"/>
    <lineage>
        <taxon>Bacteria</taxon>
        <taxon>Pseudomonadati</taxon>
        <taxon>Pseudomonadota</taxon>
        <taxon>Gammaproteobacteria</taxon>
        <taxon>Enterobacterales</taxon>
        <taxon>Enterobacteriaceae</taxon>
        <taxon>Escherichia</taxon>
    </lineage>
</organism>
<accession>A7ZZ88</accession>
<comment type="function">
    <text evidence="1">Catalyzes the 2-thiolation of uridine at the wobble position (U34) of tRNA(Lys), tRNA(Glu) and tRNA(Gln), leading to the formation of s(2)U34, the first step of tRNA-mnm(5)s(2)U34 synthesis. Sulfur is provided by IscS, via a sulfur-relay system. Binds ATP and its substrate tRNAs.</text>
</comment>
<comment type="catalytic activity">
    <reaction evidence="1">
        <text>S-sulfanyl-L-cysteinyl-[protein] + uridine(34) in tRNA + AH2 + ATP = 2-thiouridine(34) in tRNA + L-cysteinyl-[protein] + A + AMP + diphosphate + H(+)</text>
        <dbReference type="Rhea" id="RHEA:47032"/>
        <dbReference type="Rhea" id="RHEA-COMP:10131"/>
        <dbReference type="Rhea" id="RHEA-COMP:11726"/>
        <dbReference type="Rhea" id="RHEA-COMP:11727"/>
        <dbReference type="Rhea" id="RHEA-COMP:11728"/>
        <dbReference type="ChEBI" id="CHEBI:13193"/>
        <dbReference type="ChEBI" id="CHEBI:15378"/>
        <dbReference type="ChEBI" id="CHEBI:17499"/>
        <dbReference type="ChEBI" id="CHEBI:29950"/>
        <dbReference type="ChEBI" id="CHEBI:30616"/>
        <dbReference type="ChEBI" id="CHEBI:33019"/>
        <dbReference type="ChEBI" id="CHEBI:61963"/>
        <dbReference type="ChEBI" id="CHEBI:65315"/>
        <dbReference type="ChEBI" id="CHEBI:87170"/>
        <dbReference type="ChEBI" id="CHEBI:456215"/>
        <dbReference type="EC" id="2.8.1.13"/>
    </reaction>
</comment>
<comment type="subunit">
    <text evidence="1">Interacts with TusE.</text>
</comment>
<comment type="subcellular location">
    <subcellularLocation>
        <location evidence="1">Cytoplasm</location>
    </subcellularLocation>
</comment>
<comment type="similarity">
    <text evidence="1">Belongs to the MnmA/TRMU family.</text>
</comment>
<evidence type="ECO:0000255" key="1">
    <source>
        <dbReference type="HAMAP-Rule" id="MF_00144"/>
    </source>
</evidence>